<evidence type="ECO:0000255" key="1"/>
<accession>Q5UQD6</accession>
<protein>
    <recommendedName>
        <fullName>Uncharacterized protein R465</fullName>
    </recommendedName>
</protein>
<organismHost>
    <name type="scientific">Acanthamoeba polyphaga</name>
    <name type="common">Amoeba</name>
    <dbReference type="NCBI Taxonomy" id="5757"/>
</organismHost>
<gene>
    <name type="ordered locus">MIMI_R465</name>
</gene>
<keyword id="KW-0175">Coiled coil</keyword>
<keyword id="KW-1185">Reference proteome</keyword>
<organism>
    <name type="scientific">Acanthamoeba polyphaga mimivirus</name>
    <name type="common">APMV</name>
    <dbReference type="NCBI Taxonomy" id="212035"/>
    <lineage>
        <taxon>Viruses</taxon>
        <taxon>Varidnaviria</taxon>
        <taxon>Bamfordvirae</taxon>
        <taxon>Nucleocytoviricota</taxon>
        <taxon>Megaviricetes</taxon>
        <taxon>Imitervirales</taxon>
        <taxon>Mimiviridae</taxon>
        <taxon>Megamimivirinae</taxon>
        <taxon>Mimivirus</taxon>
        <taxon>Mimivirus bradfordmassiliense</taxon>
    </lineage>
</organism>
<feature type="chain" id="PRO_0000253452" description="Uncharacterized protein R465">
    <location>
        <begin position="1"/>
        <end position="180"/>
    </location>
</feature>
<feature type="coiled-coil region" evidence="1">
    <location>
        <begin position="3"/>
        <end position="33"/>
    </location>
</feature>
<dbReference type="EMBL" id="AY653733">
    <property type="protein sequence ID" value="AAV50731.1"/>
    <property type="molecule type" value="Genomic_DNA"/>
</dbReference>
<dbReference type="SMR" id="Q5UQD6"/>
<dbReference type="KEGG" id="vg:9925090"/>
<dbReference type="OrthoDB" id="19991at10239"/>
<dbReference type="Proteomes" id="UP000001134">
    <property type="component" value="Genome"/>
</dbReference>
<reference key="1">
    <citation type="journal article" date="2004" name="Science">
        <title>The 1.2-megabase genome sequence of Mimivirus.</title>
        <authorList>
            <person name="Raoult D."/>
            <person name="Audic S."/>
            <person name="Robert C."/>
            <person name="Abergel C."/>
            <person name="Renesto P."/>
            <person name="Ogata H."/>
            <person name="La Scola B."/>
            <person name="Susan M."/>
            <person name="Claverie J.-M."/>
        </authorList>
    </citation>
    <scope>NUCLEOTIDE SEQUENCE [LARGE SCALE GENOMIC DNA]</scope>
    <source>
        <strain>Rowbotham-Bradford</strain>
    </source>
</reference>
<proteinExistence type="predicted"/>
<name>YR465_MIMIV</name>
<sequence length="180" mass="21176">MSQQQSNNSNDNKEQLDRVIESLNRVNSETKQIVFKMAQGMNEIEIVRSFNQKSCDLFTILINLTKKYRRENDYNVSGYKVLFENAIKIRANLPVDKFTLMILEYAPEIYERDENCFLKMTIPDKKVTLNNEFGVIRSEKFKDLWKVLVQEDKENIADEVTLLTTFAHAYLYKTLLKNSN</sequence>